<organism>
    <name type="scientific">Lactiplantibacillus pentosus</name>
    <name type="common">Lactobacillus pentosus</name>
    <dbReference type="NCBI Taxonomy" id="1589"/>
    <lineage>
        <taxon>Bacteria</taxon>
        <taxon>Bacillati</taxon>
        <taxon>Bacillota</taxon>
        <taxon>Bacilli</taxon>
        <taxon>Lactobacillales</taxon>
        <taxon>Lactobacillaceae</taxon>
        <taxon>Lactiplantibacillus</taxon>
    </lineage>
</organism>
<reference key="1">
    <citation type="journal article" date="1991" name="Mol. Gen. Genet.">
        <title>Organization and characterization of three genes involved in D-xylose catabolism in Lactobacillus pentosus.</title>
        <authorList>
            <person name="Lokman B.C."/>
            <person name="van Santen P."/>
            <person name="Verdoes J.C."/>
            <person name="Kruese J."/>
            <person name="Leer R.J."/>
            <person name="Posno M."/>
            <person name="Pouwels P.H."/>
        </authorList>
    </citation>
    <scope>NUCLEOTIDE SEQUENCE [GENOMIC DNA]</scope>
    <source>
        <strain>MD353</strain>
    </source>
</reference>
<name>XYLA_LACPE</name>
<keyword id="KW-0119">Carbohydrate metabolism</keyword>
<keyword id="KW-0963">Cytoplasm</keyword>
<keyword id="KW-0413">Isomerase</keyword>
<keyword id="KW-0460">Magnesium</keyword>
<keyword id="KW-0479">Metal-binding</keyword>
<keyword id="KW-0859">Xylose metabolism</keyword>
<sequence>MTNEYWQGVDQIKYIGHQDKKSGLGFQYYNPDEVIGGKKMRDWLRFSVAYWHTFDQRLVDPFGDGTAQRPYDHITDPMDLALAKVDAAFEFYHKLGVDYLCFHDRDLAPEGDTLRETNRNLDKVIDKIVDYQKQTGMKVLWNTSNMFTNPRFVAGAATSPDADVFAYAAAQLKHSLEIGKRVGAENYVFWGGREGYESLWNTNMKLEQEHAAKFFHMAKDYANEIGFDAQMLLEPKPKEPSTHQYDFDAATTIAFMKEYDLDKDFKLNLEGNHANLAGHTYQHEIRVAREANLLGSLDANQGDKLIGWDIDEFPSDLYEATAAMYEVVENGSIGPRGGLNFDAKPRRSSFAANDLFYGHIVGIDTFAAGLRVALKMKQDGFLEKLVADRYSSYQSGVGAEIEAGTADFKSLESYAIDKPQSELIAATSSDPLEEVKDTINHYIIETLSK</sequence>
<evidence type="ECO:0000250" key="1"/>
<evidence type="ECO:0000305" key="2"/>
<protein>
    <recommendedName>
        <fullName>Xylose isomerase</fullName>
        <ecNumber>5.3.1.5</ecNumber>
    </recommendedName>
</protein>
<accession>P21938</accession>
<gene>
    <name type="primary">xylA</name>
</gene>
<proteinExistence type="inferred from homology"/>
<dbReference type="EC" id="5.3.1.5"/>
<dbReference type="EMBL" id="M57384">
    <property type="protein sequence ID" value="AAA25258.1"/>
    <property type="molecule type" value="Genomic_DNA"/>
</dbReference>
<dbReference type="PIR" id="S18561">
    <property type="entry name" value="S18561"/>
</dbReference>
<dbReference type="SMR" id="P21938"/>
<dbReference type="STRING" id="1589.GCA_001188985_00558"/>
<dbReference type="GO" id="GO:0005737">
    <property type="term" value="C:cytoplasm"/>
    <property type="evidence" value="ECO:0007669"/>
    <property type="project" value="UniProtKB-SubCell"/>
</dbReference>
<dbReference type="GO" id="GO:0000287">
    <property type="term" value="F:magnesium ion binding"/>
    <property type="evidence" value="ECO:0007669"/>
    <property type="project" value="UniProtKB-UniRule"/>
</dbReference>
<dbReference type="GO" id="GO:0009045">
    <property type="term" value="F:xylose isomerase activity"/>
    <property type="evidence" value="ECO:0007669"/>
    <property type="project" value="UniProtKB-UniRule"/>
</dbReference>
<dbReference type="GO" id="GO:0042732">
    <property type="term" value="P:D-xylose metabolic process"/>
    <property type="evidence" value="ECO:0007669"/>
    <property type="project" value="UniProtKB-UniRule"/>
</dbReference>
<dbReference type="Gene3D" id="3.20.20.150">
    <property type="entry name" value="Divalent-metal-dependent TIM barrel enzymes"/>
    <property type="match status" value="1"/>
</dbReference>
<dbReference type="HAMAP" id="MF_00455">
    <property type="entry name" value="Xylose_isom_A"/>
    <property type="match status" value="1"/>
</dbReference>
<dbReference type="InterPro" id="IPR036237">
    <property type="entry name" value="Xyl_isomerase-like_sf"/>
</dbReference>
<dbReference type="InterPro" id="IPR013022">
    <property type="entry name" value="Xyl_isomerase-like_TIM-brl"/>
</dbReference>
<dbReference type="InterPro" id="IPR013452">
    <property type="entry name" value="Xylose_isom_bac"/>
</dbReference>
<dbReference type="InterPro" id="IPR001998">
    <property type="entry name" value="Xylose_isomerase"/>
</dbReference>
<dbReference type="NCBIfam" id="NF003998">
    <property type="entry name" value="PRK05474.1"/>
    <property type="match status" value="1"/>
</dbReference>
<dbReference type="NCBIfam" id="TIGR02630">
    <property type="entry name" value="xylose_isom_A"/>
    <property type="match status" value="1"/>
</dbReference>
<dbReference type="PANTHER" id="PTHR48408">
    <property type="match status" value="1"/>
</dbReference>
<dbReference type="PANTHER" id="PTHR48408:SF1">
    <property type="entry name" value="XYLOSE ISOMERASE"/>
    <property type="match status" value="1"/>
</dbReference>
<dbReference type="Pfam" id="PF01261">
    <property type="entry name" value="AP_endonuc_2"/>
    <property type="match status" value="1"/>
</dbReference>
<dbReference type="PRINTS" id="PR00688">
    <property type="entry name" value="XYLOSISMRASE"/>
</dbReference>
<dbReference type="SUPFAM" id="SSF51658">
    <property type="entry name" value="Xylose isomerase-like"/>
    <property type="match status" value="1"/>
</dbReference>
<dbReference type="PROSITE" id="PS51415">
    <property type="entry name" value="XYLOSE_ISOMERASE"/>
    <property type="match status" value="1"/>
</dbReference>
<feature type="chain" id="PRO_0000195783" description="Xylose isomerase">
    <location>
        <begin position="1"/>
        <end position="449"/>
    </location>
</feature>
<feature type="active site">
    <location>
        <position position="103"/>
    </location>
</feature>
<feature type="active site" evidence="1">
    <location>
        <position position="106"/>
    </location>
</feature>
<feature type="binding site" evidence="1">
    <location>
        <position position="234"/>
    </location>
    <ligand>
        <name>Mg(2+)</name>
        <dbReference type="ChEBI" id="CHEBI:18420"/>
        <label>1</label>
    </ligand>
</feature>
<feature type="binding site" evidence="1">
    <location>
        <position position="270"/>
    </location>
    <ligand>
        <name>Mg(2+)</name>
        <dbReference type="ChEBI" id="CHEBI:18420"/>
        <label>1</label>
    </ligand>
</feature>
<feature type="binding site" evidence="1">
    <location>
        <position position="270"/>
    </location>
    <ligand>
        <name>Mg(2+)</name>
        <dbReference type="ChEBI" id="CHEBI:18420"/>
        <label>2</label>
    </ligand>
</feature>
<feature type="binding site" evidence="1">
    <location>
        <position position="273"/>
    </location>
    <ligand>
        <name>Mg(2+)</name>
        <dbReference type="ChEBI" id="CHEBI:18420"/>
        <label>2</label>
    </ligand>
</feature>
<feature type="binding site" evidence="1">
    <location>
        <position position="298"/>
    </location>
    <ligand>
        <name>Mg(2+)</name>
        <dbReference type="ChEBI" id="CHEBI:18420"/>
        <label>1</label>
    </ligand>
</feature>
<feature type="binding site" evidence="1">
    <location>
        <position position="309"/>
    </location>
    <ligand>
        <name>Mg(2+)</name>
        <dbReference type="ChEBI" id="CHEBI:18420"/>
        <label>2</label>
    </ligand>
</feature>
<feature type="binding site" evidence="1">
    <location>
        <position position="311"/>
    </location>
    <ligand>
        <name>Mg(2+)</name>
        <dbReference type="ChEBI" id="CHEBI:18420"/>
        <label>2</label>
    </ligand>
</feature>
<feature type="binding site" evidence="1">
    <location>
        <position position="342"/>
    </location>
    <ligand>
        <name>Mg(2+)</name>
        <dbReference type="ChEBI" id="CHEBI:18420"/>
        <label>1</label>
    </ligand>
</feature>
<comment type="function">
    <text>Involved in D-xylose catabolism.</text>
</comment>
<comment type="catalytic activity">
    <reaction>
        <text>alpha-D-xylose = alpha-D-xylulofuranose</text>
        <dbReference type="Rhea" id="RHEA:22816"/>
        <dbReference type="ChEBI" id="CHEBI:28518"/>
        <dbReference type="ChEBI" id="CHEBI:188998"/>
        <dbReference type="EC" id="5.3.1.5"/>
    </reaction>
</comment>
<comment type="cofactor">
    <cofactor evidence="1">
        <name>Mg(2+)</name>
        <dbReference type="ChEBI" id="CHEBI:18420"/>
    </cofactor>
    <text evidence="1">Binds 2 magnesium ions per subunit.</text>
</comment>
<comment type="subunit">
    <text evidence="1">Homotetramer.</text>
</comment>
<comment type="subcellular location">
    <subcellularLocation>
        <location>Cytoplasm</location>
    </subcellularLocation>
</comment>
<comment type="similarity">
    <text evidence="2">Belongs to the xylose isomerase family.</text>
</comment>